<proteinExistence type="inferred from homology"/>
<reference key="1">
    <citation type="journal article" date="2002" name="Nature">
        <title>The genome sequence of Schizosaccharomyces pombe.</title>
        <authorList>
            <person name="Wood V."/>
            <person name="Gwilliam R."/>
            <person name="Rajandream M.A."/>
            <person name="Lyne M.H."/>
            <person name="Lyne R."/>
            <person name="Stewart A."/>
            <person name="Sgouros J.G."/>
            <person name="Peat N."/>
            <person name="Hayles J."/>
            <person name="Baker S.G."/>
            <person name="Basham D."/>
            <person name="Bowman S."/>
            <person name="Brooks K."/>
            <person name="Brown D."/>
            <person name="Brown S."/>
            <person name="Chillingworth T."/>
            <person name="Churcher C.M."/>
            <person name="Collins M."/>
            <person name="Connor R."/>
            <person name="Cronin A."/>
            <person name="Davis P."/>
            <person name="Feltwell T."/>
            <person name="Fraser A."/>
            <person name="Gentles S."/>
            <person name="Goble A."/>
            <person name="Hamlin N."/>
            <person name="Harris D.E."/>
            <person name="Hidalgo J."/>
            <person name="Hodgson G."/>
            <person name="Holroyd S."/>
            <person name="Hornsby T."/>
            <person name="Howarth S."/>
            <person name="Huckle E.J."/>
            <person name="Hunt S."/>
            <person name="Jagels K."/>
            <person name="James K.D."/>
            <person name="Jones L."/>
            <person name="Jones M."/>
            <person name="Leather S."/>
            <person name="McDonald S."/>
            <person name="McLean J."/>
            <person name="Mooney P."/>
            <person name="Moule S."/>
            <person name="Mungall K.L."/>
            <person name="Murphy L.D."/>
            <person name="Niblett D."/>
            <person name="Odell C."/>
            <person name="Oliver K."/>
            <person name="O'Neil S."/>
            <person name="Pearson D."/>
            <person name="Quail M.A."/>
            <person name="Rabbinowitsch E."/>
            <person name="Rutherford K.M."/>
            <person name="Rutter S."/>
            <person name="Saunders D."/>
            <person name="Seeger K."/>
            <person name="Sharp S."/>
            <person name="Skelton J."/>
            <person name="Simmonds M.N."/>
            <person name="Squares R."/>
            <person name="Squares S."/>
            <person name="Stevens K."/>
            <person name="Taylor K."/>
            <person name="Taylor R.G."/>
            <person name="Tivey A."/>
            <person name="Walsh S.V."/>
            <person name="Warren T."/>
            <person name="Whitehead S."/>
            <person name="Woodward J.R."/>
            <person name="Volckaert G."/>
            <person name="Aert R."/>
            <person name="Robben J."/>
            <person name="Grymonprez B."/>
            <person name="Weltjens I."/>
            <person name="Vanstreels E."/>
            <person name="Rieger M."/>
            <person name="Schaefer M."/>
            <person name="Mueller-Auer S."/>
            <person name="Gabel C."/>
            <person name="Fuchs M."/>
            <person name="Duesterhoeft A."/>
            <person name="Fritzc C."/>
            <person name="Holzer E."/>
            <person name="Moestl D."/>
            <person name="Hilbert H."/>
            <person name="Borzym K."/>
            <person name="Langer I."/>
            <person name="Beck A."/>
            <person name="Lehrach H."/>
            <person name="Reinhardt R."/>
            <person name="Pohl T.M."/>
            <person name="Eger P."/>
            <person name="Zimmermann W."/>
            <person name="Wedler H."/>
            <person name="Wambutt R."/>
            <person name="Purnelle B."/>
            <person name="Goffeau A."/>
            <person name="Cadieu E."/>
            <person name="Dreano S."/>
            <person name="Gloux S."/>
            <person name="Lelaure V."/>
            <person name="Mottier S."/>
            <person name="Galibert F."/>
            <person name="Aves S.J."/>
            <person name="Xiang Z."/>
            <person name="Hunt C."/>
            <person name="Moore K."/>
            <person name="Hurst S.M."/>
            <person name="Lucas M."/>
            <person name="Rochet M."/>
            <person name="Gaillardin C."/>
            <person name="Tallada V.A."/>
            <person name="Garzon A."/>
            <person name="Thode G."/>
            <person name="Daga R.R."/>
            <person name="Cruzado L."/>
            <person name="Jimenez J."/>
            <person name="Sanchez M."/>
            <person name="del Rey F."/>
            <person name="Benito J."/>
            <person name="Dominguez A."/>
            <person name="Revuelta J.L."/>
            <person name="Moreno S."/>
            <person name="Armstrong J."/>
            <person name="Forsburg S.L."/>
            <person name="Cerutti L."/>
            <person name="Lowe T."/>
            <person name="McCombie W.R."/>
            <person name="Paulsen I."/>
            <person name="Potashkin J."/>
            <person name="Shpakovski G.V."/>
            <person name="Ussery D."/>
            <person name="Barrell B.G."/>
            <person name="Nurse P."/>
        </authorList>
    </citation>
    <scope>NUCLEOTIDE SEQUENCE [LARGE SCALE GENOMIC DNA]</scope>
    <source>
        <strain>972 / ATCC 24843</strain>
    </source>
</reference>
<comment type="function">
    <text evidence="1">Catalytic component of the SWR1 complex which mediates the ATP-dependent exchange of histone H2A for the H2A variant HZT1 leading to transcriptional regulation of selected genes by chromatin remodeling.</text>
</comment>
<comment type="catalytic activity">
    <reaction>
        <text>ATP + H2O = ADP + phosphate + H(+)</text>
        <dbReference type="Rhea" id="RHEA:13065"/>
        <dbReference type="ChEBI" id="CHEBI:15377"/>
        <dbReference type="ChEBI" id="CHEBI:15378"/>
        <dbReference type="ChEBI" id="CHEBI:30616"/>
        <dbReference type="ChEBI" id="CHEBI:43474"/>
        <dbReference type="ChEBI" id="CHEBI:456216"/>
        <dbReference type="EC" id="3.6.4.12"/>
    </reaction>
</comment>
<comment type="subunit">
    <text evidence="1">Component of the SWR1 chromatin-remodeling complex.</text>
</comment>
<comment type="subcellular location">
    <subcellularLocation>
        <location evidence="4">Nucleus</location>
    </subcellularLocation>
</comment>
<comment type="similarity">
    <text evidence="6">Belongs to the SNF2/RAD54 helicase family. SWR1 subfamily.</text>
</comment>
<protein>
    <recommendedName>
        <fullName>Helicase swr1</fullName>
        <ecNumber>3.6.4.12</ecNumber>
    </recommendedName>
</protein>
<feature type="chain" id="PRO_0000074372" description="Helicase swr1">
    <location>
        <begin position="1"/>
        <end position="1288"/>
    </location>
</feature>
<feature type="domain" description="HSA" evidence="4">
    <location>
        <begin position="105"/>
        <end position="177"/>
    </location>
</feature>
<feature type="domain" description="Helicase ATP-binding" evidence="2">
    <location>
        <begin position="459"/>
        <end position="624"/>
    </location>
</feature>
<feature type="domain" description="Helicase C-terminal" evidence="3">
    <location>
        <begin position="995"/>
        <end position="1150"/>
    </location>
</feature>
<feature type="region of interest" description="Disordered" evidence="5">
    <location>
        <begin position="275"/>
        <end position="326"/>
    </location>
</feature>
<feature type="region of interest" description="Disordered" evidence="5">
    <location>
        <begin position="362"/>
        <end position="384"/>
    </location>
</feature>
<feature type="region of interest" description="Disordered" evidence="5">
    <location>
        <begin position="1204"/>
        <end position="1288"/>
    </location>
</feature>
<feature type="short sequence motif" description="DEAH box">
    <location>
        <begin position="575"/>
        <end position="578"/>
    </location>
</feature>
<feature type="compositionally biased region" description="Acidic residues" evidence="5">
    <location>
        <begin position="278"/>
        <end position="305"/>
    </location>
</feature>
<feature type="compositionally biased region" description="Basic residues" evidence="5">
    <location>
        <begin position="310"/>
        <end position="326"/>
    </location>
</feature>
<feature type="compositionally biased region" description="Polar residues" evidence="5">
    <location>
        <begin position="1208"/>
        <end position="1235"/>
    </location>
</feature>
<feature type="compositionally biased region" description="Acidic residues" evidence="5">
    <location>
        <begin position="1252"/>
        <end position="1266"/>
    </location>
</feature>
<feature type="binding site" evidence="2">
    <location>
        <begin position="472"/>
        <end position="479"/>
    </location>
    <ligand>
        <name>ATP</name>
        <dbReference type="ChEBI" id="CHEBI:30616"/>
    </ligand>
</feature>
<evidence type="ECO:0000250" key="1"/>
<evidence type="ECO:0000255" key="2">
    <source>
        <dbReference type="PROSITE-ProRule" id="PRU00541"/>
    </source>
</evidence>
<evidence type="ECO:0000255" key="3">
    <source>
        <dbReference type="PROSITE-ProRule" id="PRU00542"/>
    </source>
</evidence>
<evidence type="ECO:0000255" key="4">
    <source>
        <dbReference type="PROSITE-ProRule" id="PRU00549"/>
    </source>
</evidence>
<evidence type="ECO:0000256" key="5">
    <source>
        <dbReference type="SAM" id="MobiDB-lite"/>
    </source>
</evidence>
<evidence type="ECO:0000305" key="6"/>
<dbReference type="EC" id="3.6.4.12"/>
<dbReference type="EMBL" id="CU329670">
    <property type="protein sequence ID" value="CAA22447.2"/>
    <property type="molecule type" value="Genomic_DNA"/>
</dbReference>
<dbReference type="PIR" id="T37528">
    <property type="entry name" value="T37528"/>
</dbReference>
<dbReference type="RefSeq" id="XP_001713118.1">
    <property type="nucleotide sequence ID" value="XM_001713066.2"/>
</dbReference>
<dbReference type="SMR" id="O13682"/>
<dbReference type="BioGRID" id="280637">
    <property type="interactions" value="233"/>
</dbReference>
<dbReference type="FunCoup" id="O13682">
    <property type="interactions" value="519"/>
</dbReference>
<dbReference type="STRING" id="284812.O13682"/>
<dbReference type="iPTMnet" id="O13682"/>
<dbReference type="PaxDb" id="4896-SPAC11E3.01c.1"/>
<dbReference type="EnsemblFungi" id="SPAC11E3.01c.1">
    <property type="protein sequence ID" value="SPAC11E3.01c.1:pep"/>
    <property type="gene ID" value="SPAC11E3.01c"/>
</dbReference>
<dbReference type="PomBase" id="SPAC11E3.01c">
    <property type="gene designation" value="swr1"/>
</dbReference>
<dbReference type="VEuPathDB" id="FungiDB:SPAC11E3.01c"/>
<dbReference type="eggNOG" id="KOG0391">
    <property type="taxonomic scope" value="Eukaryota"/>
</dbReference>
<dbReference type="HOGENOM" id="CLU_000315_24_4_1"/>
<dbReference type="InParanoid" id="O13682"/>
<dbReference type="OMA" id="AFQQWFG"/>
<dbReference type="PhylomeDB" id="O13682"/>
<dbReference type="PRO" id="PR:O13682"/>
<dbReference type="Proteomes" id="UP000002485">
    <property type="component" value="Chromosome I"/>
</dbReference>
<dbReference type="GO" id="GO:0005634">
    <property type="term" value="C:nucleus"/>
    <property type="evidence" value="ECO:0007005"/>
    <property type="project" value="PomBase"/>
</dbReference>
<dbReference type="GO" id="GO:0000812">
    <property type="term" value="C:Swr1 complex"/>
    <property type="evidence" value="ECO:0000314"/>
    <property type="project" value="PomBase"/>
</dbReference>
<dbReference type="GO" id="GO:0005524">
    <property type="term" value="F:ATP binding"/>
    <property type="evidence" value="ECO:0000255"/>
    <property type="project" value="PomBase"/>
</dbReference>
<dbReference type="GO" id="GO:0016887">
    <property type="term" value="F:ATP hydrolysis activity"/>
    <property type="evidence" value="ECO:0000318"/>
    <property type="project" value="GO_Central"/>
</dbReference>
<dbReference type="GO" id="GO:0140849">
    <property type="term" value="F:ATP-dependent H2AZ histone chaperone activity"/>
    <property type="evidence" value="ECO:0000269"/>
    <property type="project" value="PomBase"/>
</dbReference>
<dbReference type="GO" id="GO:0003677">
    <property type="term" value="F:DNA binding"/>
    <property type="evidence" value="ECO:0000305"/>
    <property type="project" value="PomBase"/>
</dbReference>
<dbReference type="GO" id="GO:0004386">
    <property type="term" value="F:helicase activity"/>
    <property type="evidence" value="ECO:0007669"/>
    <property type="project" value="UniProtKB-KW"/>
</dbReference>
<dbReference type="GO" id="GO:0042393">
    <property type="term" value="F:histone binding"/>
    <property type="evidence" value="ECO:0000318"/>
    <property type="project" value="GO_Central"/>
</dbReference>
<dbReference type="GO" id="GO:0006338">
    <property type="term" value="P:chromatin remodeling"/>
    <property type="evidence" value="ECO:0000318"/>
    <property type="project" value="GO_Central"/>
</dbReference>
<dbReference type="GO" id="GO:0045815">
    <property type="term" value="P:transcription initiation-coupled chromatin remodeling"/>
    <property type="evidence" value="ECO:0000305"/>
    <property type="project" value="PomBase"/>
</dbReference>
<dbReference type="CDD" id="cd18003">
    <property type="entry name" value="DEXQc_SRCAP"/>
    <property type="match status" value="1"/>
</dbReference>
<dbReference type="CDD" id="cd18793">
    <property type="entry name" value="SF2_C_SNF"/>
    <property type="match status" value="1"/>
</dbReference>
<dbReference type="FunFam" id="3.40.50.10810:FF:000005">
    <property type="entry name" value="Photoperiod-independent early flowering 1"/>
    <property type="match status" value="1"/>
</dbReference>
<dbReference type="FunFam" id="3.40.50.300:FF:000655">
    <property type="entry name" value="Protein PHOTOPERIOD-INDEPENDENT EARLY FLOWERING 1"/>
    <property type="match status" value="1"/>
</dbReference>
<dbReference type="Gene3D" id="3.40.50.300">
    <property type="entry name" value="P-loop containing nucleotide triphosphate hydrolases"/>
    <property type="match status" value="1"/>
</dbReference>
<dbReference type="Gene3D" id="1.20.120.850">
    <property type="entry name" value="SWI2/SNF2 ATPases, N-terminal domain"/>
    <property type="match status" value="1"/>
</dbReference>
<dbReference type="Gene3D" id="3.40.50.10810">
    <property type="entry name" value="Tandem AAA-ATPase domain"/>
    <property type="match status" value="1"/>
</dbReference>
<dbReference type="InterPro" id="IPR014001">
    <property type="entry name" value="Helicase_ATP-bd"/>
</dbReference>
<dbReference type="InterPro" id="IPR001650">
    <property type="entry name" value="Helicase_C-like"/>
</dbReference>
<dbReference type="InterPro" id="IPR014012">
    <property type="entry name" value="HSA_dom"/>
</dbReference>
<dbReference type="InterPro" id="IPR050520">
    <property type="entry name" value="INO80/SWR1_helicase"/>
</dbReference>
<dbReference type="InterPro" id="IPR027417">
    <property type="entry name" value="P-loop_NTPase"/>
</dbReference>
<dbReference type="InterPro" id="IPR038718">
    <property type="entry name" value="SNF2-like_sf"/>
</dbReference>
<dbReference type="InterPro" id="IPR049730">
    <property type="entry name" value="SNF2/RAD54-like_C"/>
</dbReference>
<dbReference type="InterPro" id="IPR000330">
    <property type="entry name" value="SNF2_N"/>
</dbReference>
<dbReference type="PANTHER" id="PTHR45685:SF1">
    <property type="entry name" value="HELICASE SRCAP"/>
    <property type="match status" value="1"/>
</dbReference>
<dbReference type="PANTHER" id="PTHR45685">
    <property type="entry name" value="HELICASE SRCAP-RELATED"/>
    <property type="match status" value="1"/>
</dbReference>
<dbReference type="Pfam" id="PF00271">
    <property type="entry name" value="Helicase_C"/>
    <property type="match status" value="1"/>
</dbReference>
<dbReference type="Pfam" id="PF07529">
    <property type="entry name" value="HSA"/>
    <property type="match status" value="1"/>
</dbReference>
<dbReference type="Pfam" id="PF00176">
    <property type="entry name" value="SNF2-rel_dom"/>
    <property type="match status" value="1"/>
</dbReference>
<dbReference type="SMART" id="SM00487">
    <property type="entry name" value="DEXDc"/>
    <property type="match status" value="1"/>
</dbReference>
<dbReference type="SMART" id="SM00490">
    <property type="entry name" value="HELICc"/>
    <property type="match status" value="1"/>
</dbReference>
<dbReference type="SUPFAM" id="SSF52540">
    <property type="entry name" value="P-loop containing nucleoside triphosphate hydrolases"/>
    <property type="match status" value="2"/>
</dbReference>
<dbReference type="PROSITE" id="PS51192">
    <property type="entry name" value="HELICASE_ATP_BIND_1"/>
    <property type="match status" value="1"/>
</dbReference>
<dbReference type="PROSITE" id="PS51194">
    <property type="entry name" value="HELICASE_CTER"/>
    <property type="match status" value="1"/>
</dbReference>
<dbReference type="PROSITE" id="PS51204">
    <property type="entry name" value="HSA"/>
    <property type="match status" value="1"/>
</dbReference>
<name>SWR1_SCHPO</name>
<sequence length="1288" mass="149456">MTYEESEKNKNGLSSYIKKEGSSDLKVRVRFREPKLLVTHSGHITEQPKYEHLEQYLDSYVSLEDGDHDPKEAKELVFREVQLRHRINEFRKKGYFTAEAPVELKKAPSSNNIPISYRDNLLSHVNGYARSMHNDRKVRASRSRRISGMILAHFKRLSGADEKKAKEEDKRIRLLAKRTAWEIRKKWKVIEREVRRRRAERAAEAQRVAGKEQLANILKHSTDLLEARIERANINISAQTSESAVDWNYLLKTSDDLLSVDELKLKYSNPDLIKNIEREEEAEETSDDEPLSSEDEENEDEDITEESNLRKRKVSDKTRVVNKHPPSLRRSRRFFAKKSYNHVSDLDGEVIVMKKEDITDGVSTKKDLNDGDQNEVPLHDTGSSSSLSLLYNEDVASKKKRRVNDDGLARKKSIAGISEQRKFDEPNGSPVLHANKIQVPFLFRGTLREYQQYGLEWLTALHDSNTNGILADEMGLGKTIQTIALLAHLACEKENWGPHLIIVPTSVMLNWEMEFKKFLPGFKILTYYGNPQERKEKRSGWYKPDTWHVCITSYQLVLQDHQPFRRKKWQYMILDEAHNIKNFRSQRWQSLLNFNAEHRLLLTGTPLQNNLVELWSLLYFLMPAGVTQNNSAFANLKDFQDWFSKPMDRLIEEGQDMNPEAMNTVAKLHRVLRPYLLRRLKTEVEKQMPAKYEHVVYCQLSKRQRFLYDDFINRARTREILASGNFMSIINCLMQLRKVCNHPNLHEERPIVTSFALRRSAIADLEIKDLLVRKRLLHEEPMTKLDLSTLRLIRTDSEAFDTFVSDELNSLCATNAYNRISTFLRMQIDEECKPCQFKKSNFKEHFQNKIYQEQLDKLNFQKYLNESKCSHSPIYGSNLIRLAEKLPKHSTSIDYTLYAKDDPLYLLNTTKALRSCILSTEERASNMKEIIQRFACITPKAVVVDLPELFCKTIPRDLLYEVSRKINPLHQASTRLAIAFPDKRLLQYDCGKLQVLDRLLKDLVSNGHRVLIFTQMTKVLDILEQFLNIHGHRYLRLDGATKIEQRQILTERFNNDDKIPVFILSTRSGGLGINLTGADTVIFYDSDWNPQLDAQAQDRSHRIGQTRDVHIYRLISEYTVESNMLRRANQKRMLDKIVIQGGEFTTEWFRKADVLDLFDLDDESLKKVKADSDSGSTKNEENWEVALAAAEDEEDVQAAQVARKESALEQTEFSETSTPQAMLTKDSTPLSSDSATPGFERDSTEEQSNTNDMDEDRSELEEDLDETVGHIDEYMISFLEQEGTSDEW</sequence>
<gene>
    <name type="primary">swr1</name>
    <name type="ORF">SPAC11E3.01c</name>
    <name type="ORF">SPAC2H10.03c</name>
</gene>
<organism>
    <name type="scientific">Schizosaccharomyces pombe (strain 972 / ATCC 24843)</name>
    <name type="common">Fission yeast</name>
    <dbReference type="NCBI Taxonomy" id="284812"/>
    <lineage>
        <taxon>Eukaryota</taxon>
        <taxon>Fungi</taxon>
        <taxon>Dikarya</taxon>
        <taxon>Ascomycota</taxon>
        <taxon>Taphrinomycotina</taxon>
        <taxon>Schizosaccharomycetes</taxon>
        <taxon>Schizosaccharomycetales</taxon>
        <taxon>Schizosaccharomycetaceae</taxon>
        <taxon>Schizosaccharomyces</taxon>
    </lineage>
</organism>
<keyword id="KW-0010">Activator</keyword>
<keyword id="KW-0067">ATP-binding</keyword>
<keyword id="KW-0156">Chromatin regulator</keyword>
<keyword id="KW-0238">DNA-binding</keyword>
<keyword id="KW-0347">Helicase</keyword>
<keyword id="KW-0378">Hydrolase</keyword>
<keyword id="KW-0547">Nucleotide-binding</keyword>
<keyword id="KW-0539">Nucleus</keyword>
<keyword id="KW-1185">Reference proteome</keyword>
<keyword id="KW-0804">Transcription</keyword>
<keyword id="KW-0805">Transcription regulation</keyword>
<accession>O13682</accession>
<accession>Q9URL5</accession>